<name>SRRT_HUMAN</name>
<evidence type="ECO:0000250" key="1"/>
<evidence type="ECO:0000250" key="2">
    <source>
        <dbReference type="UniProtKB" id="Q99MR6"/>
    </source>
</evidence>
<evidence type="ECO:0000256" key="3">
    <source>
        <dbReference type="SAM" id="MobiDB-lite"/>
    </source>
</evidence>
<evidence type="ECO:0000269" key="4">
    <source>
    </source>
</evidence>
<evidence type="ECO:0000269" key="5">
    <source>
    </source>
</evidence>
<evidence type="ECO:0000269" key="6">
    <source>
    </source>
</evidence>
<evidence type="ECO:0000269" key="7">
    <source>
    </source>
</evidence>
<evidence type="ECO:0000269" key="8">
    <source>
    </source>
</evidence>
<evidence type="ECO:0000269" key="9">
    <source>
    </source>
</evidence>
<evidence type="ECO:0000269" key="10">
    <source>
    </source>
</evidence>
<evidence type="ECO:0000303" key="11">
    <source>
    </source>
</evidence>
<evidence type="ECO:0000303" key="12">
    <source>
    </source>
</evidence>
<evidence type="ECO:0000303" key="13">
    <source>
    </source>
</evidence>
<evidence type="ECO:0000303" key="14">
    <source ref="2"/>
</evidence>
<evidence type="ECO:0000305" key="15"/>
<evidence type="ECO:0007744" key="16">
    <source>
    </source>
</evidence>
<evidence type="ECO:0007744" key="17">
    <source>
    </source>
</evidence>
<evidence type="ECO:0007744" key="18">
    <source>
    </source>
</evidence>
<evidence type="ECO:0007744" key="19">
    <source>
    </source>
</evidence>
<evidence type="ECO:0007744" key="20">
    <source>
    </source>
</evidence>
<evidence type="ECO:0007744" key="21">
    <source>
    </source>
</evidence>
<evidence type="ECO:0007744" key="22">
    <source>
    </source>
</evidence>
<evidence type="ECO:0007744" key="23">
    <source>
    </source>
</evidence>
<evidence type="ECO:0007744" key="24">
    <source>
    </source>
</evidence>
<evidence type="ECO:0007744" key="25">
    <source>
    </source>
</evidence>
<evidence type="ECO:0007744" key="26">
    <source>
    </source>
</evidence>
<evidence type="ECO:0007744" key="27">
    <source>
    </source>
</evidence>
<evidence type="ECO:0007744" key="28">
    <source>
    </source>
</evidence>
<evidence type="ECO:0007829" key="29">
    <source>
        <dbReference type="PDB" id="6F7J"/>
    </source>
</evidence>
<evidence type="ECO:0007829" key="30">
    <source>
        <dbReference type="PDB" id="6F7S"/>
    </source>
</evidence>
<evidence type="ECO:0007829" key="31">
    <source>
        <dbReference type="PDB" id="6F8D"/>
    </source>
</evidence>
<reference key="1">
    <citation type="journal article" date="2001" name="Nucleic Acids Res.">
        <title>Comparative analysis of the gene-dense ACHE/TFR2 region on human chromosome 7q22 with the orthologous region on mouse chromosome 5.</title>
        <authorList>
            <person name="Wilson M.D."/>
            <person name="Riemer C."/>
            <person name="Martindale D.W."/>
            <person name="Schnupf P."/>
            <person name="Boright A.P."/>
            <person name="Cheung T.L."/>
            <person name="Hardy D.M."/>
            <person name="Schwartz S."/>
            <person name="Scherer S.W."/>
            <person name="Tsui L.-C."/>
            <person name="Miller W."/>
            <person name="Koop B.F."/>
        </authorList>
    </citation>
    <scope>NUCLEOTIDE SEQUENCE [GENOMIC DNA]</scope>
    <scope>ALTERNATIVE SPLICING (ISOFORMS 1 AND 2)</scope>
</reference>
<reference key="2">
    <citation type="submission" date="2000-03" db="EMBL/GenBank/DDBJ databases">
        <title>Cloning and bioinformatic characterization of the full length human homologous asr2 gene.</title>
        <authorList>
            <person name="Yang L."/>
            <person name="Huang J."/>
            <person name="Ying K."/>
            <person name="Pan Z.M."/>
            <person name="Gu Y.Q."/>
            <person name="Wang G.Q."/>
            <person name="Lin S."/>
            <person name="Wu H."/>
            <person name="Yang Q.S."/>
            <person name="Xie Y."/>
            <person name="Mao Y.M."/>
        </authorList>
    </citation>
    <scope>NUCLEOTIDE SEQUENCE [MRNA] (ISOFORM 2)</scope>
</reference>
<reference key="3">
    <citation type="journal article" date="2001" name="Genome Res.">
        <title>Towards a catalog of human genes and proteins: sequencing and analysis of 500 novel complete protein coding human cDNAs.</title>
        <authorList>
            <person name="Wiemann S."/>
            <person name="Weil B."/>
            <person name="Wellenreuther R."/>
            <person name="Gassenhuber J."/>
            <person name="Glassl S."/>
            <person name="Ansorge W."/>
            <person name="Boecher M."/>
            <person name="Bloecker H."/>
            <person name="Bauersachs S."/>
            <person name="Blum H."/>
            <person name="Lauber J."/>
            <person name="Duesterhoeft A."/>
            <person name="Beyer A."/>
            <person name="Koehrer K."/>
            <person name="Strack N."/>
            <person name="Mewes H.-W."/>
            <person name="Ottenwaelder B."/>
            <person name="Obermaier B."/>
            <person name="Tampe J."/>
            <person name="Heubner D."/>
            <person name="Wambutt R."/>
            <person name="Korn B."/>
            <person name="Klein M."/>
            <person name="Poustka A."/>
        </authorList>
    </citation>
    <scope>NUCLEOTIDE SEQUENCE [LARGE SCALE MRNA] (ISOFORM 3)</scope>
    <source>
        <tissue>Brain</tissue>
    </source>
</reference>
<reference key="4">
    <citation type="journal article" date="2004" name="Nat. Genet.">
        <title>Complete sequencing and characterization of 21,243 full-length human cDNAs.</title>
        <authorList>
            <person name="Ota T."/>
            <person name="Suzuki Y."/>
            <person name="Nishikawa T."/>
            <person name="Otsuki T."/>
            <person name="Sugiyama T."/>
            <person name="Irie R."/>
            <person name="Wakamatsu A."/>
            <person name="Hayashi K."/>
            <person name="Sato H."/>
            <person name="Nagai K."/>
            <person name="Kimura K."/>
            <person name="Makita H."/>
            <person name="Sekine M."/>
            <person name="Obayashi M."/>
            <person name="Nishi T."/>
            <person name="Shibahara T."/>
            <person name="Tanaka T."/>
            <person name="Ishii S."/>
            <person name="Yamamoto J."/>
            <person name="Saito K."/>
            <person name="Kawai Y."/>
            <person name="Isono Y."/>
            <person name="Nakamura Y."/>
            <person name="Nagahari K."/>
            <person name="Murakami K."/>
            <person name="Yasuda T."/>
            <person name="Iwayanagi T."/>
            <person name="Wagatsuma M."/>
            <person name="Shiratori A."/>
            <person name="Sudo H."/>
            <person name="Hosoiri T."/>
            <person name="Kaku Y."/>
            <person name="Kodaira H."/>
            <person name="Kondo H."/>
            <person name="Sugawara M."/>
            <person name="Takahashi M."/>
            <person name="Kanda K."/>
            <person name="Yokoi T."/>
            <person name="Furuya T."/>
            <person name="Kikkawa E."/>
            <person name="Omura Y."/>
            <person name="Abe K."/>
            <person name="Kamihara K."/>
            <person name="Katsuta N."/>
            <person name="Sato K."/>
            <person name="Tanikawa M."/>
            <person name="Yamazaki M."/>
            <person name="Ninomiya K."/>
            <person name="Ishibashi T."/>
            <person name="Yamashita H."/>
            <person name="Murakawa K."/>
            <person name="Fujimori K."/>
            <person name="Tanai H."/>
            <person name="Kimata M."/>
            <person name="Watanabe M."/>
            <person name="Hiraoka S."/>
            <person name="Chiba Y."/>
            <person name="Ishida S."/>
            <person name="Ono Y."/>
            <person name="Takiguchi S."/>
            <person name="Watanabe S."/>
            <person name="Yosida M."/>
            <person name="Hotuta T."/>
            <person name="Kusano J."/>
            <person name="Kanehori K."/>
            <person name="Takahashi-Fujii A."/>
            <person name="Hara H."/>
            <person name="Tanase T.-O."/>
            <person name="Nomura Y."/>
            <person name="Togiya S."/>
            <person name="Komai F."/>
            <person name="Hara R."/>
            <person name="Takeuchi K."/>
            <person name="Arita M."/>
            <person name="Imose N."/>
            <person name="Musashino K."/>
            <person name="Yuuki H."/>
            <person name="Oshima A."/>
            <person name="Sasaki N."/>
            <person name="Aotsuka S."/>
            <person name="Yoshikawa Y."/>
            <person name="Matsunawa H."/>
            <person name="Ichihara T."/>
            <person name="Shiohata N."/>
            <person name="Sano S."/>
            <person name="Moriya S."/>
            <person name="Momiyama H."/>
            <person name="Satoh N."/>
            <person name="Takami S."/>
            <person name="Terashima Y."/>
            <person name="Suzuki O."/>
            <person name="Nakagawa S."/>
            <person name="Senoh A."/>
            <person name="Mizoguchi H."/>
            <person name="Goto Y."/>
            <person name="Shimizu F."/>
            <person name="Wakebe H."/>
            <person name="Hishigaki H."/>
            <person name="Watanabe T."/>
            <person name="Sugiyama A."/>
            <person name="Takemoto M."/>
            <person name="Kawakami B."/>
            <person name="Yamazaki M."/>
            <person name="Watanabe K."/>
            <person name="Kumagai A."/>
            <person name="Itakura S."/>
            <person name="Fukuzumi Y."/>
            <person name="Fujimori Y."/>
            <person name="Komiyama M."/>
            <person name="Tashiro H."/>
            <person name="Tanigami A."/>
            <person name="Fujiwara T."/>
            <person name="Ono T."/>
            <person name="Yamada K."/>
            <person name="Fujii Y."/>
            <person name="Ozaki K."/>
            <person name="Hirao M."/>
            <person name="Ohmori Y."/>
            <person name="Kawabata A."/>
            <person name="Hikiji T."/>
            <person name="Kobatake N."/>
            <person name="Inagaki H."/>
            <person name="Ikema Y."/>
            <person name="Okamoto S."/>
            <person name="Okitani R."/>
            <person name="Kawakami T."/>
            <person name="Noguchi S."/>
            <person name="Itoh T."/>
            <person name="Shigeta K."/>
            <person name="Senba T."/>
            <person name="Matsumura K."/>
            <person name="Nakajima Y."/>
            <person name="Mizuno T."/>
            <person name="Morinaga M."/>
            <person name="Sasaki M."/>
            <person name="Togashi T."/>
            <person name="Oyama M."/>
            <person name="Hata H."/>
            <person name="Watanabe M."/>
            <person name="Komatsu T."/>
            <person name="Mizushima-Sugano J."/>
            <person name="Satoh T."/>
            <person name="Shirai Y."/>
            <person name="Takahashi Y."/>
            <person name="Nakagawa K."/>
            <person name="Okumura K."/>
            <person name="Nagase T."/>
            <person name="Nomura N."/>
            <person name="Kikuchi H."/>
            <person name="Masuho Y."/>
            <person name="Yamashita R."/>
            <person name="Nakai K."/>
            <person name="Yada T."/>
            <person name="Nakamura Y."/>
            <person name="Ohara O."/>
            <person name="Isogai T."/>
            <person name="Sugano S."/>
        </authorList>
    </citation>
    <scope>NUCLEOTIDE SEQUENCE [LARGE SCALE MRNA] (ISOFORM 5)</scope>
    <source>
        <tissue>Testis</tissue>
        <tissue>Thalamus</tissue>
    </source>
</reference>
<reference key="5">
    <citation type="journal article" date="2003" name="Nature">
        <title>The DNA sequence of human chromosome 7.</title>
        <authorList>
            <person name="Hillier L.W."/>
            <person name="Fulton R.S."/>
            <person name="Fulton L.A."/>
            <person name="Graves T.A."/>
            <person name="Pepin K.H."/>
            <person name="Wagner-McPherson C."/>
            <person name="Layman D."/>
            <person name="Maas J."/>
            <person name="Jaeger S."/>
            <person name="Walker R."/>
            <person name="Wylie K."/>
            <person name="Sekhon M."/>
            <person name="Becker M.C."/>
            <person name="O'Laughlin M.D."/>
            <person name="Schaller M.E."/>
            <person name="Fewell G.A."/>
            <person name="Delehaunty K.D."/>
            <person name="Miner T.L."/>
            <person name="Nash W.E."/>
            <person name="Cordes M."/>
            <person name="Du H."/>
            <person name="Sun H."/>
            <person name="Edwards J."/>
            <person name="Bradshaw-Cordum H."/>
            <person name="Ali J."/>
            <person name="Andrews S."/>
            <person name="Isak A."/>
            <person name="Vanbrunt A."/>
            <person name="Nguyen C."/>
            <person name="Du F."/>
            <person name="Lamar B."/>
            <person name="Courtney L."/>
            <person name="Kalicki J."/>
            <person name="Ozersky P."/>
            <person name="Bielicki L."/>
            <person name="Scott K."/>
            <person name="Holmes A."/>
            <person name="Harkins R."/>
            <person name="Harris A."/>
            <person name="Strong C.M."/>
            <person name="Hou S."/>
            <person name="Tomlinson C."/>
            <person name="Dauphin-Kohlberg S."/>
            <person name="Kozlowicz-Reilly A."/>
            <person name="Leonard S."/>
            <person name="Rohlfing T."/>
            <person name="Rock S.M."/>
            <person name="Tin-Wollam A.-M."/>
            <person name="Abbott A."/>
            <person name="Minx P."/>
            <person name="Maupin R."/>
            <person name="Strowmatt C."/>
            <person name="Latreille P."/>
            <person name="Miller N."/>
            <person name="Johnson D."/>
            <person name="Murray J."/>
            <person name="Woessner J.P."/>
            <person name="Wendl M.C."/>
            <person name="Yang S.-P."/>
            <person name="Schultz B.R."/>
            <person name="Wallis J.W."/>
            <person name="Spieth J."/>
            <person name="Bieri T.A."/>
            <person name="Nelson J.O."/>
            <person name="Berkowicz N."/>
            <person name="Wohldmann P.E."/>
            <person name="Cook L.L."/>
            <person name="Hickenbotham M.T."/>
            <person name="Eldred J."/>
            <person name="Williams D."/>
            <person name="Bedell J.A."/>
            <person name="Mardis E.R."/>
            <person name="Clifton S.W."/>
            <person name="Chissoe S.L."/>
            <person name="Marra M.A."/>
            <person name="Raymond C."/>
            <person name="Haugen E."/>
            <person name="Gillett W."/>
            <person name="Zhou Y."/>
            <person name="James R."/>
            <person name="Phelps K."/>
            <person name="Iadanoto S."/>
            <person name="Bubb K."/>
            <person name="Simms E."/>
            <person name="Levy R."/>
            <person name="Clendenning J."/>
            <person name="Kaul R."/>
            <person name="Kent W.J."/>
            <person name="Furey T.S."/>
            <person name="Baertsch R.A."/>
            <person name="Brent M.R."/>
            <person name="Keibler E."/>
            <person name="Flicek P."/>
            <person name="Bork P."/>
            <person name="Suyama M."/>
            <person name="Bailey J.A."/>
            <person name="Portnoy M.E."/>
            <person name="Torrents D."/>
            <person name="Chinwalla A.T."/>
            <person name="Gish W.R."/>
            <person name="Eddy S.R."/>
            <person name="McPherson J.D."/>
            <person name="Olson M.V."/>
            <person name="Eichler E.E."/>
            <person name="Green E.D."/>
            <person name="Waterston R.H."/>
            <person name="Wilson R.K."/>
        </authorList>
    </citation>
    <scope>NUCLEOTIDE SEQUENCE [LARGE SCALE GENOMIC DNA]</scope>
</reference>
<reference key="6">
    <citation type="journal article" date="2003" name="Science">
        <title>Human chromosome 7: DNA sequence and biology.</title>
        <authorList>
            <person name="Scherer S.W."/>
            <person name="Cheung J."/>
            <person name="MacDonald J.R."/>
            <person name="Osborne L.R."/>
            <person name="Nakabayashi K."/>
            <person name="Herbrick J.-A."/>
            <person name="Carson A.R."/>
            <person name="Parker-Katiraee L."/>
            <person name="Skaug J."/>
            <person name="Khaja R."/>
            <person name="Zhang J."/>
            <person name="Hudek A.K."/>
            <person name="Li M."/>
            <person name="Haddad M."/>
            <person name="Duggan G.E."/>
            <person name="Fernandez B.A."/>
            <person name="Kanematsu E."/>
            <person name="Gentles S."/>
            <person name="Christopoulos C.C."/>
            <person name="Choufani S."/>
            <person name="Kwasnicka D."/>
            <person name="Zheng X.H."/>
            <person name="Lai Z."/>
            <person name="Nusskern D.R."/>
            <person name="Zhang Q."/>
            <person name="Gu Z."/>
            <person name="Lu F."/>
            <person name="Zeesman S."/>
            <person name="Nowaczyk M.J."/>
            <person name="Teshima I."/>
            <person name="Chitayat D."/>
            <person name="Shuman C."/>
            <person name="Weksberg R."/>
            <person name="Zackai E.H."/>
            <person name="Grebe T.A."/>
            <person name="Cox S.R."/>
            <person name="Kirkpatrick S.J."/>
            <person name="Rahman N."/>
            <person name="Friedman J.M."/>
            <person name="Heng H.H.Q."/>
            <person name="Pelicci P.G."/>
            <person name="Lo-Coco F."/>
            <person name="Belloni E."/>
            <person name="Shaffer L.G."/>
            <person name="Pober B."/>
            <person name="Morton C.C."/>
            <person name="Gusella J.F."/>
            <person name="Bruns G.A.P."/>
            <person name="Korf B.R."/>
            <person name="Quade B.J."/>
            <person name="Ligon A.H."/>
            <person name="Ferguson H."/>
            <person name="Higgins A.W."/>
            <person name="Leach N.T."/>
            <person name="Herrick S.R."/>
            <person name="Lemyre E."/>
            <person name="Farra C.G."/>
            <person name="Kim H.-G."/>
            <person name="Summers A.M."/>
            <person name="Gripp K.W."/>
            <person name="Roberts W."/>
            <person name="Szatmari P."/>
            <person name="Winsor E.J.T."/>
            <person name="Grzeschik K.-H."/>
            <person name="Teebi A."/>
            <person name="Minassian B.A."/>
            <person name="Kere J."/>
            <person name="Armengol L."/>
            <person name="Pujana M.A."/>
            <person name="Estivill X."/>
            <person name="Wilson M.D."/>
            <person name="Koop B.F."/>
            <person name="Tosi S."/>
            <person name="Moore G.E."/>
            <person name="Boright A.P."/>
            <person name="Zlotorynski E."/>
            <person name="Kerem B."/>
            <person name="Kroisel P.M."/>
            <person name="Petek E."/>
            <person name="Oscier D.G."/>
            <person name="Mould S.J."/>
            <person name="Doehner H."/>
            <person name="Doehner K."/>
            <person name="Rommens J.M."/>
            <person name="Vincent J.B."/>
            <person name="Venter J.C."/>
            <person name="Li P.W."/>
            <person name="Mural R.J."/>
            <person name="Adams M.D."/>
            <person name="Tsui L.-C."/>
        </authorList>
    </citation>
    <scope>NUCLEOTIDE SEQUENCE [LARGE SCALE GENOMIC DNA]</scope>
</reference>
<reference key="7">
    <citation type="submission" date="2005-09" db="EMBL/GenBank/DDBJ databases">
        <authorList>
            <person name="Mural R.J."/>
            <person name="Istrail S."/>
            <person name="Sutton G.G."/>
            <person name="Florea L."/>
            <person name="Halpern A.L."/>
            <person name="Mobarry C.M."/>
            <person name="Lippert R."/>
            <person name="Walenz B."/>
            <person name="Shatkay H."/>
            <person name="Dew I."/>
            <person name="Miller J.R."/>
            <person name="Flanigan M.J."/>
            <person name="Edwards N.J."/>
            <person name="Bolanos R."/>
            <person name="Fasulo D."/>
            <person name="Halldorsson B.V."/>
            <person name="Hannenhalli S."/>
            <person name="Turner R."/>
            <person name="Yooseph S."/>
            <person name="Lu F."/>
            <person name="Nusskern D.R."/>
            <person name="Shue B.C."/>
            <person name="Zheng X.H."/>
            <person name="Zhong F."/>
            <person name="Delcher A.L."/>
            <person name="Huson D.H."/>
            <person name="Kravitz S.A."/>
            <person name="Mouchard L."/>
            <person name="Reinert K."/>
            <person name="Remington K.A."/>
            <person name="Clark A.G."/>
            <person name="Waterman M.S."/>
            <person name="Eichler E.E."/>
            <person name="Adams M.D."/>
            <person name="Hunkapiller M.W."/>
            <person name="Myers E.W."/>
            <person name="Venter J.C."/>
        </authorList>
    </citation>
    <scope>NUCLEOTIDE SEQUENCE [LARGE SCALE GENOMIC DNA]</scope>
</reference>
<reference key="8">
    <citation type="journal article" date="2004" name="Genome Res.">
        <title>The status, quality, and expansion of the NIH full-length cDNA project: the Mammalian Gene Collection (MGC).</title>
        <authorList>
            <consortium name="The MGC Project Team"/>
        </authorList>
    </citation>
    <scope>NUCLEOTIDE SEQUENCE [LARGE SCALE MRNA] (ISOFORM 4)</scope>
    <scope>NUCLEOTIDE SEQUENCE [LARGE SCALE MRNA] OF 65-876 (ISOFORM 1)</scope>
    <source>
        <tissue>Brain</tissue>
        <tissue>Kidney</tissue>
    </source>
</reference>
<reference key="9">
    <citation type="submission" date="1998-08" db="EMBL/GenBank/DDBJ databases">
        <authorList>
            <person name="Hu G."/>
        </authorList>
    </citation>
    <scope>NUCLEOTIDE SEQUENCE [MRNA] OF 443-876 (ISOFORMS 2/3)</scope>
</reference>
<reference key="10">
    <citation type="journal article" date="2006" name="Cell">
        <title>Global, in vivo, and site-specific phosphorylation dynamics in signaling networks.</title>
        <authorList>
            <person name="Olsen J.V."/>
            <person name="Blagoev B."/>
            <person name="Gnad F."/>
            <person name="Macek B."/>
            <person name="Kumar C."/>
            <person name="Mortensen P."/>
            <person name="Mann M."/>
        </authorList>
    </citation>
    <scope>PHOSPHORYLATION [LARGE SCALE ANALYSIS] AT TYR-8; SER-493 AND THR-544</scope>
    <scope>IDENTIFICATION BY MASS SPECTROMETRY [LARGE SCALE ANALYSIS]</scope>
    <source>
        <tissue>Cervix carcinoma</tissue>
    </source>
</reference>
<reference key="11">
    <citation type="journal article" date="2006" name="Nat. Biotechnol.">
        <title>A probability-based approach for high-throughput protein phosphorylation analysis and site localization.</title>
        <authorList>
            <person name="Beausoleil S.A."/>
            <person name="Villen J."/>
            <person name="Gerber S.A."/>
            <person name="Rush J."/>
            <person name="Gygi S.P."/>
        </authorList>
    </citation>
    <scope>PHOSPHORYLATION [LARGE SCALE ANALYSIS] AT SER-540</scope>
    <scope>IDENTIFICATION BY MASS SPECTROMETRY [LARGE SCALE ANALYSIS]</scope>
    <source>
        <tissue>Cervix carcinoma</tissue>
    </source>
</reference>
<reference key="12">
    <citation type="journal article" date="2007" name="J. Proteome Res.">
        <title>Improved titanium dioxide enrichment of phosphopeptides from HeLa cells and high confident phosphopeptide identification by cross-validation of MS/MS and MS/MS/MS spectra.</title>
        <authorList>
            <person name="Yu L.R."/>
            <person name="Zhu Z."/>
            <person name="Chan K.C."/>
            <person name="Issaq H.J."/>
            <person name="Dimitrov D.S."/>
            <person name="Veenstra T.D."/>
        </authorList>
    </citation>
    <scope>PHOSPHORYLATION [LARGE SCALE ANALYSIS] AT THR-544</scope>
    <scope>IDENTIFICATION BY MASS SPECTROMETRY [LARGE SCALE ANALYSIS]</scope>
    <source>
        <tissue>Cervix carcinoma</tissue>
    </source>
</reference>
<reference key="13">
    <citation type="journal article" date="2007" name="Mol. Cell. Proteomics">
        <title>Quantitative phosphoproteome profiling of Wnt3a-mediated signaling network: indicating the involvement of ribonucleoside-diphosphate reductase M2 subunit phosphorylation at residue serine 20 in canonical Wnt signal transduction.</title>
        <authorList>
            <person name="Tang L.-Y."/>
            <person name="Deng N."/>
            <person name="Wang L.-S."/>
            <person name="Dai J."/>
            <person name="Wang Z.-L."/>
            <person name="Jiang X.-S."/>
            <person name="Li S.-J."/>
            <person name="Li L."/>
            <person name="Sheng Q.-H."/>
            <person name="Wu D.-Q."/>
            <person name="Li L."/>
            <person name="Zeng R."/>
        </authorList>
    </citation>
    <scope>PHOSPHORYLATION [LARGE SCALE ANALYSIS] AT THR-544</scope>
    <scope>IDENTIFICATION BY MASS SPECTROMETRY [LARGE SCALE ANALYSIS]</scope>
    <source>
        <tissue>Embryonic kidney</tissue>
    </source>
</reference>
<reference key="14">
    <citation type="journal article" date="2008" name="J. Proteome Res.">
        <title>Combining protein-based IMAC, peptide-based IMAC, and MudPIT for efficient phosphoproteomic analysis.</title>
        <authorList>
            <person name="Cantin G.T."/>
            <person name="Yi W."/>
            <person name="Lu B."/>
            <person name="Park S.K."/>
            <person name="Xu T."/>
            <person name="Lee J.-D."/>
            <person name="Yates J.R. III"/>
        </authorList>
    </citation>
    <scope>PHOSPHORYLATION [LARGE SCALE ANALYSIS] AT SER-493</scope>
    <scope>IDENTIFICATION BY MASS SPECTROMETRY [LARGE SCALE ANALYSIS]</scope>
    <source>
        <tissue>Cervix carcinoma</tissue>
    </source>
</reference>
<reference key="15">
    <citation type="journal article" date="2008" name="Mol. Cell. Biol.">
        <title>ARS2 is a conserved eukaryotic gene essential for early mammalian development.</title>
        <authorList>
            <person name="Wilson M.D."/>
            <person name="Wang D."/>
            <person name="Wagner R."/>
            <person name="Breyssens H."/>
            <person name="Gertsenstein M."/>
            <person name="Lobe C."/>
            <person name="Lu X."/>
            <person name="Nagy A."/>
            <person name="Burke R.D."/>
            <person name="Koop B.F."/>
            <person name="Howard P.L."/>
        </authorList>
    </citation>
    <scope>TISSUE SPECIFICITY</scope>
</reference>
<reference key="16">
    <citation type="journal article" date="2008" name="Proc. Natl. Acad. Sci. U.S.A.">
        <title>A quantitative atlas of mitotic phosphorylation.</title>
        <authorList>
            <person name="Dephoure N."/>
            <person name="Zhou C."/>
            <person name="Villen J."/>
            <person name="Beausoleil S.A."/>
            <person name="Bakalarski C.E."/>
            <person name="Elledge S.J."/>
            <person name="Gygi S.P."/>
        </authorList>
    </citation>
    <scope>PHOSPHORYLATION [LARGE SCALE ANALYSIS] AT SER-540 AND THR-544</scope>
    <scope>IDENTIFICATION BY MASS SPECTROMETRY [LARGE SCALE ANALYSIS]</scope>
    <source>
        <tissue>Cervix carcinoma</tissue>
    </source>
</reference>
<reference key="17">
    <citation type="journal article" date="2009" name="Anal. Chem.">
        <title>Lys-N and trypsin cover complementary parts of the phosphoproteome in a refined SCX-based approach.</title>
        <authorList>
            <person name="Gauci S."/>
            <person name="Helbig A.O."/>
            <person name="Slijper M."/>
            <person name="Krijgsveld J."/>
            <person name="Heck A.J."/>
            <person name="Mohammed S."/>
        </authorList>
    </citation>
    <scope>IDENTIFICATION BY MASS SPECTROMETRY [LARGE SCALE ANALYSIS]</scope>
</reference>
<reference key="18">
    <citation type="journal article" date="2009" name="Cell">
        <title>Ars2 links the nuclear cap-binding complex to RNA interference and cell proliferation.</title>
        <authorList>
            <person name="Gruber J.J."/>
            <person name="Zatechka D.S."/>
            <person name="Sabin L.R."/>
            <person name="Yong J."/>
            <person name="Lum J.J."/>
            <person name="Kong M."/>
            <person name="Zong W.-X."/>
            <person name="Zhang Z."/>
            <person name="Lau C.-K."/>
            <person name="Rawlings J."/>
            <person name="Cherry S."/>
            <person name="Ihle J.N."/>
            <person name="Dreyfuss G."/>
            <person name="Thompson C.B."/>
        </authorList>
    </citation>
    <scope>FUNCTION</scope>
</reference>
<reference key="19">
    <citation type="journal article" date="2009" name="Mol. Cell. Biol.">
        <title>Interaction of FLASH with arsenite resistance protein 2 is involved in cell cycle progression at S phase.</title>
        <authorList>
            <person name="Kiriyama M."/>
            <person name="Kobayashi Y."/>
            <person name="Saito M."/>
            <person name="Ishikawa F."/>
            <person name="Yonehara S."/>
        </authorList>
    </citation>
    <scope>INTERACTION WITH CASP8AP2</scope>
</reference>
<reference key="20">
    <citation type="journal article" date="2009" name="Sci. Signal.">
        <title>Quantitative phosphoproteomic analysis of T cell receptor signaling reveals system-wide modulation of protein-protein interactions.</title>
        <authorList>
            <person name="Mayya V."/>
            <person name="Lundgren D.H."/>
            <person name="Hwang S.-I."/>
            <person name="Rezaul K."/>
            <person name="Wu L."/>
            <person name="Eng J.K."/>
            <person name="Rodionov V."/>
            <person name="Han D.K."/>
        </authorList>
    </citation>
    <scope>PHOSPHORYLATION [LARGE SCALE ANALYSIS] AT THR-544</scope>
    <scope>IDENTIFICATION BY MASS SPECTROMETRY [LARGE SCALE ANALYSIS]</scope>
    <source>
        <tissue>Leukemic T-cell</tissue>
    </source>
</reference>
<reference key="21">
    <citation type="journal article" date="2010" name="Mol. Cancer Res.">
        <title>Interactions of ErbB4 and Kap1 connect the growth factor and DNA damage response pathways.</title>
        <authorList>
            <person name="Gilmore-Hebert M."/>
            <person name="Ramabhadran R."/>
            <person name="Stern D.F."/>
        </authorList>
    </citation>
    <scope>IDENTIFICATION BY MASS SPECTROMETRY</scope>
    <scope>INTERACTION WITH ERBB4</scope>
    <scope>SUBCELLULAR LOCATION</scope>
</reference>
<reference key="22">
    <citation type="journal article" date="2010" name="Sci. Signal.">
        <title>Quantitative phosphoproteomics reveals widespread full phosphorylation site occupancy during mitosis.</title>
        <authorList>
            <person name="Olsen J.V."/>
            <person name="Vermeulen M."/>
            <person name="Santamaria A."/>
            <person name="Kumar C."/>
            <person name="Miller M.L."/>
            <person name="Jensen L.J."/>
            <person name="Gnad F."/>
            <person name="Cox J."/>
            <person name="Jensen T.S."/>
            <person name="Nigg E.A."/>
            <person name="Brunak S."/>
            <person name="Mann M."/>
        </authorList>
    </citation>
    <scope>ACETYLATION [LARGE SCALE ANALYSIS] AT GLY-2</scope>
    <scope>PHOSPHORYLATION [LARGE SCALE ANALYSIS] AT SER-4; SER-74; SER-493 AND THR-544</scope>
    <scope>CLEAVAGE OF INITIATOR METHIONINE [LARGE SCALE ANALYSIS]</scope>
    <scope>IDENTIFICATION BY MASS SPECTROMETRY [LARGE SCALE ANALYSIS]</scope>
    <source>
        <tissue>Cervix carcinoma</tissue>
    </source>
</reference>
<reference key="23">
    <citation type="journal article" date="2011" name="BMC Syst. Biol.">
        <title>Initial characterization of the human central proteome.</title>
        <authorList>
            <person name="Burkard T.R."/>
            <person name="Planyavsky M."/>
            <person name="Kaupe I."/>
            <person name="Breitwieser F.P."/>
            <person name="Buerckstuemmer T."/>
            <person name="Bennett K.L."/>
            <person name="Superti-Furga G."/>
            <person name="Colinge J."/>
        </authorList>
    </citation>
    <scope>IDENTIFICATION BY MASS SPECTROMETRY [LARGE SCALE ANALYSIS]</scope>
</reference>
<reference key="24">
    <citation type="journal article" date="2011" name="Sci. Signal.">
        <title>System-wide temporal characterization of the proteome and phosphoproteome of human embryonic stem cell differentiation.</title>
        <authorList>
            <person name="Rigbolt K.T."/>
            <person name="Prokhorova T.A."/>
            <person name="Akimov V."/>
            <person name="Henningsen J."/>
            <person name="Johansen P.T."/>
            <person name="Kratchmarova I."/>
            <person name="Kassem M."/>
            <person name="Mann M."/>
            <person name="Olsen J.V."/>
            <person name="Blagoev B."/>
        </authorList>
    </citation>
    <scope>ACETYLATION [LARGE SCALE ANALYSIS] AT GLY-2</scope>
    <scope>PHOSPHORYLATION [LARGE SCALE ANALYSIS] AT SER-4 AND THR-544</scope>
    <scope>CLEAVAGE OF INITIATOR METHIONINE [LARGE SCALE ANALYSIS]</scope>
    <scope>IDENTIFICATION BY MASS SPECTROMETRY [LARGE SCALE ANALYSIS]</scope>
</reference>
<reference key="25">
    <citation type="journal article" date="2013" name="J. Proteome Res.">
        <title>Toward a comprehensive characterization of a human cancer cell phosphoproteome.</title>
        <authorList>
            <person name="Zhou H."/>
            <person name="Di Palma S."/>
            <person name="Preisinger C."/>
            <person name="Peng M."/>
            <person name="Polat A.N."/>
            <person name="Heck A.J."/>
            <person name="Mohammed S."/>
        </authorList>
    </citation>
    <scope>PHOSPHORYLATION [LARGE SCALE ANALYSIS] AT SER-67; SER-74; SER-136; SER-493; THR-544; THR-671 AND SER-679</scope>
    <scope>IDENTIFICATION BY MASS SPECTROMETRY [LARGE SCALE ANALYSIS]</scope>
    <source>
        <tissue>Cervix carcinoma</tissue>
        <tissue>Erythroleukemia</tissue>
    </source>
</reference>
<reference key="26">
    <citation type="journal article" date="2014" name="J. Proteomics">
        <title>An enzyme assisted RP-RPLC approach for in-depth analysis of human liver phosphoproteome.</title>
        <authorList>
            <person name="Bian Y."/>
            <person name="Song C."/>
            <person name="Cheng K."/>
            <person name="Dong M."/>
            <person name="Wang F."/>
            <person name="Huang J."/>
            <person name="Sun D."/>
            <person name="Wang L."/>
            <person name="Ye M."/>
            <person name="Zou H."/>
        </authorList>
    </citation>
    <scope>PHOSPHORYLATION [LARGE SCALE ANALYSIS] AT SER-67; SER-74 AND SER-570</scope>
    <scope>IDENTIFICATION BY MASS SPECTROMETRY [LARGE SCALE ANALYSIS]</scope>
    <source>
        <tissue>Liver</tissue>
    </source>
</reference>
<reference key="27">
    <citation type="journal article" date="2014" name="Mol. Cell. Proteomics">
        <title>Immunoaffinity enrichment and mass spectrometry analysis of protein methylation.</title>
        <authorList>
            <person name="Guo A."/>
            <person name="Gu H."/>
            <person name="Zhou J."/>
            <person name="Mulhern D."/>
            <person name="Wang Y."/>
            <person name="Lee K.A."/>
            <person name="Yang V."/>
            <person name="Aguiar M."/>
            <person name="Kornhauser J."/>
            <person name="Jia X."/>
            <person name="Ren J."/>
            <person name="Beausoleil S.A."/>
            <person name="Silva J.C."/>
            <person name="Vemulapalli V."/>
            <person name="Bedford M.T."/>
            <person name="Comb M.J."/>
        </authorList>
    </citation>
    <scope>METHYLATION [LARGE SCALE ANALYSIS] AT ARG-833; ARG-840 AND ARG-850</scope>
    <scope>IDENTIFICATION BY MASS SPECTROMETRY [LARGE SCALE ANALYSIS]</scope>
    <source>
        <tissue>Colon carcinoma</tissue>
    </source>
</reference>
<reference key="28">
    <citation type="journal article" date="2015" name="Nat. Commun.">
        <title>mRNA export through an additional cap-binding complex consisting of NCBP1 and NCBP3.</title>
        <authorList>
            <person name="Gebhardt A."/>
            <person name="Habjan M."/>
            <person name="Benda C."/>
            <person name="Meiler A."/>
            <person name="Haas D.A."/>
            <person name="Hein M.Y."/>
            <person name="Mann A."/>
            <person name="Mann M."/>
            <person name="Habermann B."/>
            <person name="Pichlmair A."/>
        </authorList>
    </citation>
    <scope>INTERACTION WITH NCBP2 AND NCBP3</scope>
</reference>
<reference key="29">
    <citation type="journal article" date="2015" name="Nucleic Acids Res.">
        <title>Luzp4 defines a new mRNA export pathway in cancer cells.</title>
        <authorList>
            <person name="Viphakone N."/>
            <person name="Cumberbatch M.G."/>
            <person name="Livingstone M.J."/>
            <person name="Heath P.R."/>
            <person name="Dickman M.J."/>
            <person name="Catto J.W."/>
            <person name="Wilson S.A."/>
        </authorList>
    </citation>
    <scope>INTERACTION WITH LUZP4</scope>
</reference>
<reference key="30">
    <citation type="journal article" date="2017" name="Nat. Struct. Mol. Biol.">
        <title>Site-specific mapping of the human SUMO proteome reveals co-modification with phosphorylation.</title>
        <authorList>
            <person name="Hendriks I.A."/>
            <person name="Lyon D."/>
            <person name="Young C."/>
            <person name="Jensen L.J."/>
            <person name="Vertegaal A.C."/>
            <person name="Nielsen M.L."/>
        </authorList>
    </citation>
    <scope>SUMOYLATION [LARGE SCALE ANALYSIS] AT LYS-150</scope>
    <scope>IDENTIFICATION BY MASS SPECTROMETRY [LARGE SCALE ANALYSIS]</scope>
</reference>
<reference key="31">
    <citation type="journal article" date="2019" name="Genes Dev.">
        <title>NRDE2 negatively regulates exosome functions by inhibiting MTR4 recruitment and exosome interaction.</title>
        <authorList>
            <person name="Wang J."/>
            <person name="Chen J."/>
            <person name="Wu G."/>
            <person name="Zhang H."/>
            <person name="Du X."/>
            <person name="Chen S."/>
            <person name="Zhang L."/>
            <person name="Wang K."/>
            <person name="Fan J."/>
            <person name="Gao S."/>
            <person name="Wu X."/>
            <person name="Zhang S."/>
            <person name="Kuai B."/>
            <person name="Zhao P."/>
            <person name="Chi B."/>
            <person name="Wang L."/>
            <person name="Li G."/>
            <person name="Wong C.C.L."/>
            <person name="Zhou Y."/>
            <person name="Li J."/>
            <person name="Yun C."/>
            <person name="Cheng H."/>
        </authorList>
    </citation>
    <scope>INTERACTION WITH MTREX</scope>
</reference>
<protein>
    <recommendedName>
        <fullName>Serrate RNA effector molecule homolog</fullName>
    </recommendedName>
    <alternativeName>
        <fullName>Arsenite-resistance protein 2</fullName>
    </alternativeName>
</protein>
<organism>
    <name type="scientific">Homo sapiens</name>
    <name type="common">Human</name>
    <dbReference type="NCBI Taxonomy" id="9606"/>
    <lineage>
        <taxon>Eukaryota</taxon>
        <taxon>Metazoa</taxon>
        <taxon>Chordata</taxon>
        <taxon>Craniata</taxon>
        <taxon>Vertebrata</taxon>
        <taxon>Euteleostomi</taxon>
        <taxon>Mammalia</taxon>
        <taxon>Eutheria</taxon>
        <taxon>Euarchontoglires</taxon>
        <taxon>Primates</taxon>
        <taxon>Haplorrhini</taxon>
        <taxon>Catarrhini</taxon>
        <taxon>Hominidae</taxon>
        <taxon>Homo</taxon>
    </lineage>
</organism>
<comment type="function">
    <text evidence="1 6">Acts as a mediator between the cap-binding complex (CBC) and the primary microRNAs (miRNAs) processing machinery during cell proliferation. Contributes to the stability and delivery of capped primary miRNA transcripts to the primary miRNA processing complex containing DGCR8 and DROSHA, thereby playing a role in RNA-mediated gene silencing (RNAi) by miRNAs. Binds capped RNAs (m7GpppG-capped RNA); however interaction is probably mediated via its interaction with NCBP1/CBP80 component of the CBC complex. Involved in cell cycle progression at S phase. Does not directly confer arsenite resistance but rather modulates arsenic sensitivity. Independently of its activity on miRNAs, necessary and sufficient to promote neural stem cell self-renewal. Does so by directly binding SOX2 promoter and positively regulating its transcription (By similarity).</text>
</comment>
<comment type="subunit">
    <text evidence="2 5 7 8 9 10">Interacts with NCBP1 and DROSHA (By similarity). Interacts with CASP8AP2 and ERBB4. Interacts with LUZP4. Interacts with NCBP2/CBP20 and NCBP3 (PubMed:26382858). Interacts with MTREX (PubMed:30842217).</text>
</comment>
<comment type="interaction">
    <interactant intactId="EBI-712721">
        <id>Q9BXP5</id>
    </interactant>
    <interactant intactId="EBI-466029">
        <id>P42858</id>
        <label>HTT</label>
    </interactant>
    <organismsDiffer>false</organismsDiffer>
    <experiments>3</experiments>
</comment>
<comment type="interaction">
    <interactant intactId="EBI-25866384">
        <id>Q9BXP5-3</id>
    </interactant>
    <interactant intactId="EBI-466029">
        <id>P42858</id>
        <label>HTT</label>
    </interactant>
    <organismsDiffer>false</organismsDiffer>
    <experiments>6</experiments>
</comment>
<comment type="interaction">
    <interactant intactId="EBI-16701991">
        <id>Q9BXP5-4</id>
    </interactant>
    <interactant intactId="EBI-466029">
        <id>P42858</id>
        <label>HTT</label>
    </interactant>
    <organismsDiffer>false</organismsDiffer>
    <experiments>3</experiments>
</comment>
<comment type="subcellular location">
    <subcellularLocation>
        <location evidence="1">Nucleus</location>
        <location evidence="1">Nucleoplasm</location>
    </subcellularLocation>
    <subcellularLocation>
        <location evidence="1">Cytoplasm</location>
    </subcellularLocation>
    <text evidence="1">Predominantly nuclear. Shuttles between the nucleus and the cytoplasm in a CRM1-dependent way (By similarity).</text>
</comment>
<comment type="alternative products">
    <event type="alternative splicing"/>
    <isoform>
        <id>Q9BXP5-1</id>
        <name>1</name>
        <name>A</name>
        <sequence type="displayed"/>
    </isoform>
    <isoform>
        <id>Q9BXP5-2</id>
        <name>2</name>
        <name>B</name>
        <sequence type="described" ref="VSP_000324"/>
    </isoform>
    <isoform>
        <id>Q9BXP5-3</id>
        <name>3</name>
        <sequence type="described" ref="VSP_032502"/>
    </isoform>
    <isoform>
        <id>Q9BXP5-4</id>
        <name>4</name>
        <sequence type="described" ref="VSP_032502 VSP_000324"/>
    </isoform>
    <isoform>
        <id>Q9BXP5-5</id>
        <name>5</name>
        <sequence type="described" ref="VSP_038122 VSP_038123"/>
    </isoform>
</comment>
<comment type="tissue specificity">
    <text evidence="4">Ubiquitously expressed.</text>
</comment>
<comment type="similarity">
    <text evidence="15">Belongs to the ARS2 family.</text>
</comment>
<comment type="sequence caution" evidence="15">
    <conflict type="erroneous initiation">
        <sequence resource="EMBL-CDS" id="AAD17774"/>
    </conflict>
    <text>Truncated N-terminus.</text>
</comment>
<comment type="sequence caution" evidence="15">
    <conflict type="frameshift">
        <sequence resource="EMBL-CDS" id="AAM00189"/>
    </conflict>
</comment>
<comment type="sequence caution" evidence="15">
    <conflict type="erroneous initiation">
        <sequence resource="EMBL-CDS" id="BAG58876"/>
    </conflict>
    <text>Truncated N-terminus.</text>
</comment>
<comment type="sequence caution" evidence="15">
    <conflict type="erroneous gene model prediction">
        <sequence resource="EMBL-CDS" id="EAL23816"/>
    </conflict>
</comment>
<dbReference type="EMBL" id="AF312032">
    <property type="protein sequence ID" value="AAK21005.1"/>
    <property type="molecule type" value="Genomic_DNA"/>
</dbReference>
<dbReference type="EMBL" id="AF312032">
    <property type="protein sequence ID" value="AAK21006.1"/>
    <property type="molecule type" value="Genomic_DNA"/>
</dbReference>
<dbReference type="EMBL" id="AF248955">
    <property type="protein sequence ID" value="AAM00189.1"/>
    <property type="status" value="ALT_FRAME"/>
    <property type="molecule type" value="mRNA"/>
</dbReference>
<dbReference type="EMBL" id="AL096723">
    <property type="protein sequence ID" value="CAB46374.2"/>
    <property type="molecule type" value="mRNA"/>
</dbReference>
<dbReference type="EMBL" id="AK296131">
    <property type="protein sequence ID" value="BAG58876.1"/>
    <property type="status" value="ALT_INIT"/>
    <property type="molecule type" value="mRNA"/>
</dbReference>
<dbReference type="EMBL" id="AK302820">
    <property type="protein sequence ID" value="BAG64018.1"/>
    <property type="molecule type" value="mRNA"/>
</dbReference>
<dbReference type="EMBL" id="AC011895">
    <property type="status" value="NOT_ANNOTATED_CDS"/>
    <property type="molecule type" value="Genomic_DNA"/>
</dbReference>
<dbReference type="EMBL" id="CH236956">
    <property type="protein sequence ID" value="EAL23815.1"/>
    <property type="molecule type" value="Genomic_DNA"/>
</dbReference>
<dbReference type="EMBL" id="CH236956">
    <property type="protein sequence ID" value="EAL23816.1"/>
    <property type="status" value="ALT_SEQ"/>
    <property type="molecule type" value="Genomic_DNA"/>
</dbReference>
<dbReference type="EMBL" id="CH471091">
    <property type="protein sequence ID" value="EAW76467.1"/>
    <property type="molecule type" value="Genomic_DNA"/>
</dbReference>
<dbReference type="EMBL" id="BC000082">
    <property type="protein sequence ID" value="AAH00082.2"/>
    <property type="molecule type" value="mRNA"/>
</dbReference>
<dbReference type="EMBL" id="BC069249">
    <property type="protein sequence ID" value="AAH69249.1"/>
    <property type="molecule type" value="mRNA"/>
</dbReference>
<dbReference type="EMBL" id="BC109117">
    <property type="protein sequence ID" value="AAI09118.1"/>
    <property type="molecule type" value="mRNA"/>
</dbReference>
<dbReference type="EMBL" id="AF082871">
    <property type="protein sequence ID" value="AAD17774.1"/>
    <property type="status" value="ALT_INIT"/>
    <property type="molecule type" value="mRNA"/>
</dbReference>
<dbReference type="CCDS" id="CCDS34709.1">
    <molecule id="Q9BXP5-1"/>
</dbReference>
<dbReference type="CCDS" id="CCDS47665.1">
    <molecule id="Q9BXP5-2"/>
</dbReference>
<dbReference type="CCDS" id="CCDS47666.1">
    <molecule id="Q9BXP5-3"/>
</dbReference>
<dbReference type="CCDS" id="CCDS47667.1">
    <molecule id="Q9BXP5-4"/>
</dbReference>
<dbReference type="PIR" id="T12455">
    <property type="entry name" value="T12455"/>
</dbReference>
<dbReference type="RefSeq" id="NP_001122324.1">
    <molecule id="Q9BXP5-3"/>
    <property type="nucleotide sequence ID" value="NM_001128852.2"/>
</dbReference>
<dbReference type="RefSeq" id="NP_001122325.1">
    <molecule id="Q9BXP5-2"/>
    <property type="nucleotide sequence ID" value="NM_001128853.2"/>
</dbReference>
<dbReference type="RefSeq" id="NP_001122326.1">
    <molecule id="Q9BXP5-4"/>
    <property type="nucleotide sequence ID" value="NM_001128854.2"/>
</dbReference>
<dbReference type="RefSeq" id="NP_056992.4">
    <molecule id="Q9BXP5-1"/>
    <property type="nucleotide sequence ID" value="NM_015908.5"/>
</dbReference>
<dbReference type="PDB" id="5OO6">
    <property type="method" value="X-ray"/>
    <property type="resolution" value="2.80 A"/>
    <property type="chains" value="C/F/I/L/O/R/U/X=832-876"/>
</dbReference>
<dbReference type="PDB" id="6F7J">
    <property type="method" value="X-ray"/>
    <property type="resolution" value="3.22 A"/>
    <property type="chains" value="A=171-270, B=409-764"/>
</dbReference>
<dbReference type="PDB" id="6F7P">
    <property type="method" value="X-ray"/>
    <property type="resolution" value="3.70 A"/>
    <property type="chains" value="A/B=147-270, C/D=409-764"/>
</dbReference>
<dbReference type="PDB" id="6F7S">
    <property type="method" value="X-ray"/>
    <property type="resolution" value="3.37 A"/>
    <property type="chains" value="A/B=147-270, C/D=409-568, C/D=600-764"/>
</dbReference>
<dbReference type="PDB" id="6F8D">
    <property type="method" value="X-ray"/>
    <property type="resolution" value="3.48 A"/>
    <property type="chains" value="A/B=171-270, C/D=409-764"/>
</dbReference>
<dbReference type="PDB" id="8PMP">
    <property type="method" value="EM"/>
    <property type="resolution" value="3.43 A"/>
    <property type="chains" value="D=148-876"/>
</dbReference>
<dbReference type="PDBsum" id="5OO6"/>
<dbReference type="PDBsum" id="6F7J"/>
<dbReference type="PDBsum" id="6F7P"/>
<dbReference type="PDBsum" id="6F7S"/>
<dbReference type="PDBsum" id="6F8D"/>
<dbReference type="PDBsum" id="8PMP"/>
<dbReference type="EMDB" id="EMD-17763"/>
<dbReference type="SMR" id="Q9BXP5"/>
<dbReference type="BioGRID" id="119626">
    <property type="interactions" value="360"/>
</dbReference>
<dbReference type="CORUM" id="Q9BXP5"/>
<dbReference type="FunCoup" id="Q9BXP5">
    <property type="interactions" value="3881"/>
</dbReference>
<dbReference type="IntAct" id="Q9BXP5">
    <property type="interactions" value="215"/>
</dbReference>
<dbReference type="MINT" id="Q9BXP5"/>
<dbReference type="STRING" id="9606.ENSP00000480421"/>
<dbReference type="GlyGen" id="Q9BXP5">
    <property type="glycosylation" value="1 site, 1 O-linked glycan (1 site)"/>
</dbReference>
<dbReference type="iPTMnet" id="Q9BXP5"/>
<dbReference type="MetOSite" id="Q9BXP5"/>
<dbReference type="PhosphoSitePlus" id="Q9BXP5"/>
<dbReference type="SwissPalm" id="Q9BXP5"/>
<dbReference type="BioMuta" id="SRRT"/>
<dbReference type="DMDM" id="20137457"/>
<dbReference type="jPOST" id="Q9BXP5"/>
<dbReference type="MassIVE" id="Q9BXP5"/>
<dbReference type="PaxDb" id="9606-ENSP00000480421"/>
<dbReference type="PeptideAtlas" id="Q9BXP5"/>
<dbReference type="ProteomicsDB" id="79475">
    <molecule id="Q9BXP5-1"/>
</dbReference>
<dbReference type="ProteomicsDB" id="79476">
    <molecule id="Q9BXP5-2"/>
</dbReference>
<dbReference type="ProteomicsDB" id="79477">
    <molecule id="Q9BXP5-3"/>
</dbReference>
<dbReference type="ProteomicsDB" id="79478">
    <molecule id="Q9BXP5-4"/>
</dbReference>
<dbReference type="ProteomicsDB" id="79479">
    <molecule id="Q9BXP5-5"/>
</dbReference>
<dbReference type="Pumba" id="Q9BXP5"/>
<dbReference type="ABCD" id="Q9BXP5">
    <property type="antibodies" value="1 sequenced antibody"/>
</dbReference>
<dbReference type="Antibodypedia" id="30897">
    <property type="antibodies" value="160 antibodies from 27 providers"/>
</dbReference>
<dbReference type="DNASU" id="51593"/>
<dbReference type="Ensembl" id="ENST00000611405.5">
    <molecule id="Q9BXP5-1"/>
    <property type="protein sequence ID" value="ENSP00000480421.1"/>
    <property type="gene ID" value="ENSG00000087087.20"/>
</dbReference>
<dbReference type="Ensembl" id="ENST00000614484.4">
    <molecule id="Q9BXP5-3"/>
    <property type="protein sequence ID" value="ENSP00000481173.1"/>
    <property type="gene ID" value="ENSG00000087087.20"/>
</dbReference>
<dbReference type="Ensembl" id="ENST00000618262.4">
    <molecule id="Q9BXP5-2"/>
    <property type="protein sequence ID" value="ENSP00000478341.1"/>
    <property type="gene ID" value="ENSG00000087087.20"/>
</dbReference>
<dbReference type="Ensembl" id="ENST00000618411.4">
    <molecule id="Q9BXP5-4"/>
    <property type="protein sequence ID" value="ENSP00000483556.1"/>
    <property type="gene ID" value="ENSG00000087087.20"/>
</dbReference>
<dbReference type="GeneID" id="51593"/>
<dbReference type="KEGG" id="hsa:51593"/>
<dbReference type="MANE-Select" id="ENST00000611405.5">
    <property type="protein sequence ID" value="ENSP00000480421.1"/>
    <property type="RefSeq nucleotide sequence ID" value="NM_015908.6"/>
    <property type="RefSeq protein sequence ID" value="NP_056992.4"/>
</dbReference>
<dbReference type="UCSC" id="uc032zzu.2">
    <molecule id="Q9BXP5-1"/>
    <property type="organism name" value="human"/>
</dbReference>
<dbReference type="AGR" id="HGNC:24101"/>
<dbReference type="CTD" id="51593"/>
<dbReference type="DisGeNET" id="51593"/>
<dbReference type="GeneCards" id="SRRT"/>
<dbReference type="HGNC" id="HGNC:24101">
    <property type="gene designation" value="SRRT"/>
</dbReference>
<dbReference type="HPA" id="ENSG00000087087">
    <property type="expression patterns" value="Low tissue specificity"/>
</dbReference>
<dbReference type="MIM" id="614469">
    <property type="type" value="gene"/>
</dbReference>
<dbReference type="neXtProt" id="NX_Q9BXP5"/>
<dbReference type="OpenTargets" id="ENSG00000087087"/>
<dbReference type="PharmGKB" id="PA164726295"/>
<dbReference type="VEuPathDB" id="HostDB:ENSG00000087087"/>
<dbReference type="eggNOG" id="KOG2295">
    <property type="taxonomic scope" value="Eukaryota"/>
</dbReference>
<dbReference type="GeneTree" id="ENSGT00390000005492"/>
<dbReference type="HOGENOM" id="CLU_008560_0_0_1"/>
<dbReference type="InParanoid" id="Q9BXP5"/>
<dbReference type="OMA" id="FEDKIMQ"/>
<dbReference type="OrthoDB" id="342064at2759"/>
<dbReference type="PAN-GO" id="Q9BXP5">
    <property type="GO annotations" value="2 GO annotations based on evolutionary models"/>
</dbReference>
<dbReference type="PhylomeDB" id="Q9BXP5"/>
<dbReference type="TreeFam" id="TF317609"/>
<dbReference type="PathwayCommons" id="Q9BXP5"/>
<dbReference type="Reactome" id="R-HSA-6807505">
    <property type="pathway name" value="RNA polymerase II transcribes snRNA genes"/>
</dbReference>
<dbReference type="Reactome" id="R-HSA-72163">
    <property type="pathway name" value="mRNA Splicing - Major Pathway"/>
</dbReference>
<dbReference type="SignaLink" id="Q9BXP5"/>
<dbReference type="BioGRID-ORCS" id="51593">
    <property type="hits" value="688 hits in 1158 CRISPR screens"/>
</dbReference>
<dbReference type="CD-CODE" id="232F8A39">
    <property type="entry name" value="P-body"/>
</dbReference>
<dbReference type="CD-CODE" id="DEE660B4">
    <property type="entry name" value="Stress granule"/>
</dbReference>
<dbReference type="ChiTaRS" id="SRRT">
    <property type="organism name" value="human"/>
</dbReference>
<dbReference type="GeneWiki" id="ARS2"/>
<dbReference type="GenomeRNAi" id="51593"/>
<dbReference type="Pharos" id="Q9BXP5">
    <property type="development level" value="Tbio"/>
</dbReference>
<dbReference type="PRO" id="PR:Q9BXP5"/>
<dbReference type="Proteomes" id="UP000005640">
    <property type="component" value="Chromosome 7"/>
</dbReference>
<dbReference type="RNAct" id="Q9BXP5">
    <property type="molecule type" value="protein"/>
</dbReference>
<dbReference type="Bgee" id="ENSG00000087087">
    <property type="expression patterns" value="Expressed in left testis and 208 other cell types or tissues"/>
</dbReference>
<dbReference type="ExpressionAtlas" id="Q9BXP5">
    <property type="expression patterns" value="baseline and differential"/>
</dbReference>
<dbReference type="GO" id="GO:0005737">
    <property type="term" value="C:cytoplasm"/>
    <property type="evidence" value="ECO:0000250"/>
    <property type="project" value="UniProtKB"/>
</dbReference>
<dbReference type="GO" id="GO:0016604">
    <property type="term" value="C:nuclear body"/>
    <property type="evidence" value="ECO:0000318"/>
    <property type="project" value="GO_Central"/>
</dbReference>
<dbReference type="GO" id="GO:0005654">
    <property type="term" value="C:nucleoplasm"/>
    <property type="evidence" value="ECO:0000314"/>
    <property type="project" value="HPA"/>
</dbReference>
<dbReference type="GO" id="GO:0032991">
    <property type="term" value="C:protein-containing complex"/>
    <property type="evidence" value="ECO:0000314"/>
    <property type="project" value="CAFA"/>
</dbReference>
<dbReference type="GO" id="GO:1990904">
    <property type="term" value="C:ribonucleoprotein complex"/>
    <property type="evidence" value="ECO:0000314"/>
    <property type="project" value="FlyBase"/>
</dbReference>
<dbReference type="GO" id="GO:0003677">
    <property type="term" value="F:DNA binding"/>
    <property type="evidence" value="ECO:0000250"/>
    <property type="project" value="UniProtKB"/>
</dbReference>
<dbReference type="GO" id="GO:0140262">
    <property type="term" value="F:mRNA cap binding complex binding"/>
    <property type="evidence" value="ECO:0000314"/>
    <property type="project" value="FlyBase"/>
</dbReference>
<dbReference type="GO" id="GO:0030674">
    <property type="term" value="F:protein-macromolecule adaptor activity"/>
    <property type="evidence" value="ECO:0000314"/>
    <property type="project" value="FlyBase"/>
</dbReference>
<dbReference type="GO" id="GO:0003723">
    <property type="term" value="F:RNA binding"/>
    <property type="evidence" value="ECO:0007005"/>
    <property type="project" value="UniProtKB"/>
</dbReference>
<dbReference type="GO" id="GO:0097150">
    <property type="term" value="P:neuronal stem cell population maintenance"/>
    <property type="evidence" value="ECO:0000250"/>
    <property type="project" value="UniProtKB"/>
</dbReference>
<dbReference type="GO" id="GO:0050769">
    <property type="term" value="P:positive regulation of neurogenesis"/>
    <property type="evidence" value="ECO:0007669"/>
    <property type="project" value="Ensembl"/>
</dbReference>
<dbReference type="GO" id="GO:0031053">
    <property type="term" value="P:primary miRNA processing"/>
    <property type="evidence" value="ECO:0000315"/>
    <property type="project" value="UniProtKB"/>
</dbReference>
<dbReference type="GO" id="GO:0006355">
    <property type="term" value="P:regulation of DNA-templated transcription"/>
    <property type="evidence" value="ECO:0000250"/>
    <property type="project" value="UniProtKB"/>
</dbReference>
<dbReference type="GO" id="GO:0046685">
    <property type="term" value="P:response to arsenic-containing substance"/>
    <property type="evidence" value="ECO:0000303"/>
    <property type="project" value="UniProtKB"/>
</dbReference>
<dbReference type="FunFam" id="3.30.70.330:FF:000593">
    <property type="entry name" value="Serrate RNA effector molecule homolog"/>
    <property type="match status" value="1"/>
</dbReference>
<dbReference type="IDEAL" id="IID00734"/>
<dbReference type="InterPro" id="IPR035979">
    <property type="entry name" value="RBD_domain_sf"/>
</dbReference>
<dbReference type="InterPro" id="IPR039727">
    <property type="entry name" value="SE/Ars2"/>
</dbReference>
<dbReference type="InterPro" id="IPR007042">
    <property type="entry name" value="SERRATE/Ars2_C"/>
</dbReference>
<dbReference type="InterPro" id="IPR021933">
    <property type="entry name" value="SERRATE/Ars2_N"/>
</dbReference>
<dbReference type="PANTHER" id="PTHR13165">
    <property type="entry name" value="ARSENITE-RESISTANCE PROTEIN 2"/>
    <property type="match status" value="1"/>
</dbReference>
<dbReference type="PANTHER" id="PTHR13165:SF0">
    <property type="entry name" value="SERRATE RNA EFFECTOR MOLECULE HOMOLOG"/>
    <property type="match status" value="1"/>
</dbReference>
<dbReference type="Pfam" id="PF04959">
    <property type="entry name" value="ARS2"/>
    <property type="match status" value="1"/>
</dbReference>
<dbReference type="Pfam" id="PF12066">
    <property type="entry name" value="SERRATE_Ars2_N"/>
    <property type="match status" value="1"/>
</dbReference>
<dbReference type="SUPFAM" id="SSF54928">
    <property type="entry name" value="RNA-binding domain, RBD"/>
    <property type="match status" value="1"/>
</dbReference>
<accession>Q9BXP5</accession>
<accession>A4D2E5</accession>
<accession>A4D2E6</accession>
<accession>A6NK22</accession>
<accession>B4DJL4</accession>
<accession>B4DZA6</accession>
<accession>O95808</accession>
<accession>Q32MI4</accession>
<accession>Q6NT74</accession>
<accession>Q8TDQ5</accession>
<accession>Q9BWP6</accession>
<accession>Q9BXP4</accession>
<accession>Q9Y4S4</accession>
<sequence length="876" mass="100666">MGDSDDEYDRRRRDKFRRERSDYDRSRERDERRRGDDWNDREWDRGRERRSRGEYRDYDRNRRERFSPPRHELSPPQKRMRRDWDEHSSDPYHSGYEMPYAGGGGGPTYGPPQPWGHPDVHIMQHHVLPIQARLGSIAEIDLGVPPPVMKTFKEFLLSLDDSVDETEAVKRYNDYKLDFRRQQMQDFFLAHKDEEWFRSKYHPDEVGKRRQEARGALQNRLRVFLSLMETGWFDNLLLDIDKADAIVKMLDAAVIKMEGGTENDLRILEQEEEEEQAGKPGEPSKKEEGRAGAGLGDGERKTNDKDEKKEDGKQAENDSSNDDKTKKSEGDGDKEEKKEDSEKEAKKSSKKRNRKHSGDDSFDEGSVSESESESESGQAEEEKEEAEEALKEKEKPKEEEWEKPKDAAGLECKPRPLHKTCSLFMRNIAPNISRAEIISLCKRYPGFMRVALSEPQPERRFFRRGWVTFDRSVNIKEICWNLQNIRLRECELSPGVNRDLTRRVRNINGITQHKQIVRNDIKLAAKLIHTLDDRTQLWASEPGTPPLPTSLPSQNPILKNITDYLIEEVSAEEEELLGSSGGAPPEEPPKEGNPAEINVERDEKLIKVLDKLLLYLRIVHSLDYYNTCEYPNEDEMPNRCGIIHVRGPMPPNRISHGEVLEWQKTFEEKLTPLLSVRESLSEEEAQKMGRKDPEQEVEKFVTSNTQELGKDKWLCPLSGKKFKGPEFVRKHIFNKHAEKIEEVKKEVAFFNNFLTDAKRPALPEIKPAQPPGPAQILPPGLTPGLPYPHQTPQGLMPYGQPRPPILGYGAGAVRPAVPTGGPPYPHAPYGAGRGNYDAFRGQGGYPGKPRNRMVRGDPRAIVEYRDLDAPDDVDFF</sequence>
<gene>
    <name type="primary">SRRT</name>
    <name type="synonym">ARS2</name>
    <name type="synonym">ASR2</name>
</gene>
<feature type="initiator methionine" description="Removed" evidence="23 24">
    <location>
        <position position="1"/>
    </location>
</feature>
<feature type="chain" id="PRO_0000220965" description="Serrate RNA effector molecule homolog">
    <location>
        <begin position="2"/>
        <end position="876"/>
    </location>
</feature>
<feature type="region of interest" description="Disordered" evidence="3">
    <location>
        <begin position="1"/>
        <end position="90"/>
    </location>
</feature>
<feature type="region of interest" description="Disordered" evidence="3">
    <location>
        <begin position="271"/>
        <end position="412"/>
    </location>
</feature>
<feature type="region of interest" description="Disordered" evidence="3">
    <location>
        <begin position="575"/>
        <end position="598"/>
    </location>
</feature>
<feature type="region of interest" description="Disordered" evidence="3">
    <location>
        <begin position="835"/>
        <end position="854"/>
    </location>
</feature>
<feature type="compositionally biased region" description="Basic and acidic residues" evidence="3">
    <location>
        <begin position="8"/>
        <end position="73"/>
    </location>
</feature>
<feature type="compositionally biased region" description="Basic and acidic residues" evidence="3">
    <location>
        <begin position="297"/>
        <end position="347"/>
    </location>
</feature>
<feature type="compositionally biased region" description="Acidic residues" evidence="3">
    <location>
        <begin position="370"/>
        <end position="387"/>
    </location>
</feature>
<feature type="compositionally biased region" description="Basic and acidic residues" evidence="3">
    <location>
        <begin position="388"/>
        <end position="412"/>
    </location>
</feature>
<feature type="modified residue" description="N-acetylglycine" evidence="23 24">
    <location>
        <position position="2"/>
    </location>
</feature>
<feature type="modified residue" description="Phosphoserine" evidence="23 24">
    <location>
        <position position="4"/>
    </location>
</feature>
<feature type="modified residue" description="Phosphotyrosine" evidence="17">
    <location>
        <position position="8"/>
    </location>
</feature>
<feature type="modified residue" description="Phosphoserine" evidence="25 27">
    <location>
        <position position="67"/>
    </location>
</feature>
<feature type="modified residue" description="Phosphoserine" evidence="23 25 27">
    <location>
        <position position="74"/>
    </location>
</feature>
<feature type="modified residue" description="Phosphoserine" evidence="25">
    <location>
        <position position="136"/>
    </location>
</feature>
<feature type="modified residue" description="Phosphoserine" evidence="17 20 23 25">
    <location>
        <position position="493"/>
    </location>
</feature>
<feature type="modified residue" description="Phosphoserine" evidence="16 21">
    <location>
        <position position="540"/>
    </location>
</feature>
<feature type="modified residue" description="Phosphothreonine" evidence="17 18 19 21 22 23 24 25">
    <location>
        <position position="544"/>
    </location>
</feature>
<feature type="modified residue" description="Phosphoserine" evidence="27">
    <location>
        <position position="570"/>
    </location>
</feature>
<feature type="modified residue" description="Phosphothreonine" evidence="25">
    <location>
        <position position="671"/>
    </location>
</feature>
<feature type="modified residue" description="Phosphoserine" evidence="25">
    <location>
        <position position="679"/>
    </location>
</feature>
<feature type="modified residue" description="Omega-N-methylarginine" evidence="26">
    <location>
        <position position="833"/>
    </location>
</feature>
<feature type="modified residue" description="Omega-N-methylarginine" evidence="26">
    <location>
        <position position="840"/>
    </location>
</feature>
<feature type="modified residue" description="Omega-N-methylarginine" evidence="26">
    <location>
        <position position="850"/>
    </location>
</feature>
<feature type="cross-link" description="Glycyl lysine isopeptide (Lys-Gly) (interchain with G-Cter in SUMO2)" evidence="28">
    <location>
        <position position="150"/>
    </location>
</feature>
<feature type="splice variant" id="VSP_038122" description="In isoform 5." evidence="12">
    <location>
        <begin position="196"/>
        <end position="231"/>
    </location>
</feature>
<feature type="splice variant" id="VSP_038123" description="In isoform 5." evidence="12">
    <location>
        <position position="387"/>
    </location>
</feature>
<feature type="splice variant" id="VSP_032502" description="In isoform 3 and isoform 4." evidence="11 13">
    <location>
        <position position="388"/>
    </location>
</feature>
<feature type="splice variant" id="VSP_000324" description="In isoform 2 and isoform 4." evidence="13 14">
    <original>ILPPG</original>
    <variation>S</variation>
    <location>
        <begin position="776"/>
        <end position="780"/>
    </location>
</feature>
<feature type="sequence conflict" description="In Ref. 3; CAB46374." evidence="15" ref="3">
    <original>G</original>
    <variation>GG</variation>
    <location>
        <position position="106"/>
    </location>
</feature>
<feature type="sequence conflict" description="In Ref. 2; AAM00189." evidence="15" ref="2">
    <original>D</original>
    <variation>E</variation>
    <location>
        <position position="119"/>
    </location>
</feature>
<feature type="sequence conflict" description="In Ref. 2; AAM00189." evidence="15" ref="2">
    <original>N</original>
    <variation>Y</variation>
    <location>
        <position position="303"/>
    </location>
</feature>
<feature type="sequence conflict" description="In Ref. 4; BAG64018." evidence="15" ref="4">
    <original>D</original>
    <variation>Y</variation>
    <location>
        <position position="311"/>
    </location>
</feature>
<feature type="sequence conflict" description="In Ref. 4; BAG64018." evidence="15" ref="4">
    <original>R</original>
    <variation>K</variation>
    <location>
        <position position="443"/>
    </location>
</feature>
<feature type="sequence conflict" description="In Ref. 3; CAB46374." evidence="15" ref="3">
    <original>R</original>
    <variation>W</variation>
    <location>
        <position position="498"/>
    </location>
</feature>
<feature type="sequence conflict" description="In Ref. 3; CAB46374." evidence="15" ref="3">
    <original>V</original>
    <variation>A</variation>
    <location>
        <position position="728"/>
    </location>
</feature>
<feature type="sequence conflict" description="In Ref. 3; CAB46374." evidence="15" ref="3">
    <original>K</original>
    <variation>R</variation>
    <location>
        <position position="744"/>
    </location>
</feature>
<feature type="helix" evidence="30">
    <location>
        <begin position="152"/>
        <end position="156"/>
    </location>
</feature>
<feature type="helix" evidence="29">
    <location>
        <begin position="175"/>
        <end position="190"/>
    </location>
</feature>
<feature type="helix" evidence="29">
    <location>
        <begin position="195"/>
        <end position="201"/>
    </location>
</feature>
<feature type="helix" evidence="29">
    <location>
        <begin position="203"/>
        <end position="230"/>
    </location>
</feature>
<feature type="turn" evidence="29">
    <location>
        <begin position="231"/>
        <end position="235"/>
    </location>
</feature>
<feature type="helix" evidence="29">
    <location>
        <begin position="240"/>
        <end position="242"/>
    </location>
</feature>
<feature type="helix" evidence="29">
    <location>
        <begin position="243"/>
        <end position="257"/>
    </location>
</feature>
<feature type="helix" evidence="29">
    <location>
        <begin position="264"/>
        <end position="268"/>
    </location>
</feature>
<feature type="strand" evidence="29">
    <location>
        <begin position="422"/>
        <end position="428"/>
    </location>
</feature>
<feature type="helix" evidence="29">
    <location>
        <begin position="434"/>
        <end position="442"/>
    </location>
</feature>
<feature type="strand" evidence="29">
    <location>
        <begin position="447"/>
        <end position="452"/>
    </location>
</feature>
<feature type="helix" evidence="29">
    <location>
        <begin position="457"/>
        <end position="459"/>
    </location>
</feature>
<feature type="strand" evidence="29">
    <location>
        <begin position="463"/>
        <end position="469"/>
    </location>
</feature>
<feature type="strand" evidence="30">
    <location>
        <begin position="471"/>
        <end position="473"/>
    </location>
</feature>
<feature type="helix" evidence="29">
    <location>
        <begin position="475"/>
        <end position="481"/>
    </location>
</feature>
<feature type="turn" evidence="29">
    <location>
        <begin position="482"/>
        <end position="484"/>
    </location>
</feature>
<feature type="strand" evidence="31">
    <location>
        <begin position="486"/>
        <end position="489"/>
    </location>
</feature>
<feature type="strand" evidence="29">
    <location>
        <begin position="495"/>
        <end position="497"/>
    </location>
</feature>
<feature type="strand" evidence="29">
    <location>
        <begin position="504"/>
        <end position="506"/>
    </location>
</feature>
<feature type="helix" evidence="29">
    <location>
        <begin position="509"/>
        <end position="512"/>
    </location>
</feature>
<feature type="helix" evidence="29">
    <location>
        <begin position="514"/>
        <end position="535"/>
    </location>
</feature>
<feature type="strand" evidence="30">
    <location>
        <begin position="540"/>
        <end position="544"/>
    </location>
</feature>
<feature type="helix" evidence="29">
    <location>
        <begin position="556"/>
        <end position="558"/>
    </location>
</feature>
<feature type="helix" evidence="29">
    <location>
        <begin position="562"/>
        <end position="565"/>
    </location>
</feature>
<feature type="helix" evidence="29">
    <location>
        <begin position="571"/>
        <end position="577"/>
    </location>
</feature>
<feature type="helix" evidence="29">
    <location>
        <begin position="603"/>
        <end position="618"/>
    </location>
</feature>
<feature type="turn" evidence="29">
    <location>
        <begin position="624"/>
        <end position="627"/>
    </location>
</feature>
<feature type="turn" evidence="29">
    <location>
        <begin position="631"/>
        <end position="635"/>
    </location>
</feature>
<feature type="strand" evidence="29">
    <location>
        <begin position="636"/>
        <end position="638"/>
    </location>
</feature>
<feature type="strand" evidence="29">
    <location>
        <begin position="643"/>
        <end position="646"/>
    </location>
</feature>
<feature type="helix" evidence="29">
    <location>
        <begin position="658"/>
        <end position="670"/>
    </location>
</feature>
<feature type="helix" evidence="29">
    <location>
        <begin position="671"/>
        <end position="674"/>
    </location>
</feature>
<feature type="helix" evidence="29">
    <location>
        <begin position="682"/>
        <end position="688"/>
    </location>
</feature>
<feature type="helix" evidence="29">
    <location>
        <begin position="693"/>
        <end position="704"/>
    </location>
</feature>
<feature type="strand" evidence="30">
    <location>
        <begin position="706"/>
        <end position="709"/>
    </location>
</feature>
<feature type="strand" evidence="30">
    <location>
        <begin position="712"/>
        <end position="714"/>
    </location>
</feature>
<feature type="turn" evidence="29">
    <location>
        <begin position="716"/>
        <end position="719"/>
    </location>
</feature>
<feature type="strand" evidence="30">
    <location>
        <begin position="721"/>
        <end position="724"/>
    </location>
</feature>
<feature type="helix" evidence="29">
    <location>
        <begin position="725"/>
        <end position="734"/>
    </location>
</feature>
<feature type="helix" evidence="29">
    <location>
        <begin position="737"/>
        <end position="755"/>
    </location>
</feature>
<feature type="strand" evidence="29">
    <location>
        <begin position="756"/>
        <end position="758"/>
    </location>
</feature>
<keyword id="KW-0002">3D-structure</keyword>
<keyword id="KW-0007">Acetylation</keyword>
<keyword id="KW-0010">Activator</keyword>
<keyword id="KW-0025">Alternative splicing</keyword>
<keyword id="KW-0963">Cytoplasm</keyword>
<keyword id="KW-1017">Isopeptide bond</keyword>
<keyword id="KW-0488">Methylation</keyword>
<keyword id="KW-0539">Nucleus</keyword>
<keyword id="KW-0597">Phosphoprotein</keyword>
<keyword id="KW-1267">Proteomics identification</keyword>
<keyword id="KW-1185">Reference proteome</keyword>
<keyword id="KW-0943">RNA-mediated gene silencing</keyword>
<keyword id="KW-0804">Transcription</keyword>
<keyword id="KW-0805">Transcription regulation</keyword>
<keyword id="KW-0832">Ubl conjugation</keyword>
<proteinExistence type="evidence at protein level"/>